<comment type="catalytic activity">
    <reaction evidence="1">
        <text>(6R)-10-formyltetrahydrofolate + 5-amino-1-(5-phospho-beta-D-ribosyl)imidazole-4-carboxamide = 5-formamido-1-(5-phospho-D-ribosyl)imidazole-4-carboxamide + (6S)-5,6,7,8-tetrahydrofolate</text>
        <dbReference type="Rhea" id="RHEA:22192"/>
        <dbReference type="ChEBI" id="CHEBI:57453"/>
        <dbReference type="ChEBI" id="CHEBI:58467"/>
        <dbReference type="ChEBI" id="CHEBI:58475"/>
        <dbReference type="ChEBI" id="CHEBI:195366"/>
        <dbReference type="EC" id="2.1.2.3"/>
    </reaction>
</comment>
<comment type="catalytic activity">
    <reaction evidence="1">
        <text>IMP + H2O = 5-formamido-1-(5-phospho-D-ribosyl)imidazole-4-carboxamide</text>
        <dbReference type="Rhea" id="RHEA:18445"/>
        <dbReference type="ChEBI" id="CHEBI:15377"/>
        <dbReference type="ChEBI" id="CHEBI:58053"/>
        <dbReference type="ChEBI" id="CHEBI:58467"/>
        <dbReference type="EC" id="3.5.4.10"/>
    </reaction>
</comment>
<comment type="pathway">
    <text evidence="1">Purine metabolism; IMP biosynthesis via de novo pathway; 5-formamido-1-(5-phospho-D-ribosyl)imidazole-4-carboxamide from 5-amino-1-(5-phospho-D-ribosyl)imidazole-4-carboxamide (10-formyl THF route): step 1/1.</text>
</comment>
<comment type="pathway">
    <text evidence="1">Purine metabolism; IMP biosynthesis via de novo pathway; IMP from 5-formamido-1-(5-phospho-D-ribosyl)imidazole-4-carboxamide: step 1/1.</text>
</comment>
<comment type="domain">
    <text evidence="1">The IMP cyclohydrolase activity resides in the N-terminal region.</text>
</comment>
<comment type="similarity">
    <text evidence="1">Belongs to the PurH family.</text>
</comment>
<feature type="chain" id="PRO_1000018891" description="Bifunctional purine biosynthesis protein PurH">
    <location>
        <begin position="1"/>
        <end position="529"/>
    </location>
</feature>
<feature type="domain" description="MGS-like" evidence="2">
    <location>
        <begin position="1"/>
        <end position="148"/>
    </location>
</feature>
<name>PUR9_PECAS</name>
<keyword id="KW-0378">Hydrolase</keyword>
<keyword id="KW-0511">Multifunctional enzyme</keyword>
<keyword id="KW-0658">Purine biosynthesis</keyword>
<keyword id="KW-1185">Reference proteome</keyword>
<keyword id="KW-0808">Transferase</keyword>
<organism>
    <name type="scientific">Pectobacterium atrosepticum (strain SCRI 1043 / ATCC BAA-672)</name>
    <name type="common">Erwinia carotovora subsp. atroseptica</name>
    <dbReference type="NCBI Taxonomy" id="218491"/>
    <lineage>
        <taxon>Bacteria</taxon>
        <taxon>Pseudomonadati</taxon>
        <taxon>Pseudomonadota</taxon>
        <taxon>Gammaproteobacteria</taxon>
        <taxon>Enterobacterales</taxon>
        <taxon>Pectobacteriaceae</taxon>
        <taxon>Pectobacterium</taxon>
    </lineage>
</organism>
<gene>
    <name evidence="1" type="primary">purH</name>
    <name type="ordered locus">ECA0241</name>
</gene>
<sequence>MQQRRPIRRALLSVSDKAGIVEFAQALSHRGVELLSTGGTARLLADAGLAVTEVSDYTGFPEMMDGRVKTLHPKVHGGILGRRDQDDAIMTQHDIKPIDIVVVNLYPFAQTVARENCTLEDAVENIDIGGPTMVRSAAKNHKDVAIVVKSSDYTTIINEIDANEGSLTYETRFDLAIKAFEHTAAYDSMIANYFGALVPPYHGDTDKPSGHFPRTLNLNYIKKQDMRYGENSHQQAAFYIEENIHEASVATSTQLQGKALSYNNIADTDAALECVKEFAEPACVIVKHANPCGVAIGGSILDAYDRAYKTDPTSAFGGIIAFNRELDEETAQAIISRQFVEVIIAPSASDAALKVTAAKQNVRVLTSGSWQQRVPALDFKRVNGGLLVQDRDLGMVDTSQLRVVTERQPSEQELRDALFCWKVAKFVKSNAIVYARDNMTIGIGAGQMSRVYSAKIAGIKAADEGLEVKGSAMASDAFFPFRDGIDAAAAVGISCVIQPGGSIRDDEVIAAANEHGIAMIFTDMRHFRH</sequence>
<proteinExistence type="inferred from homology"/>
<reference key="1">
    <citation type="journal article" date="2004" name="Proc. Natl. Acad. Sci. U.S.A.">
        <title>Genome sequence of the enterobacterial phytopathogen Erwinia carotovora subsp. atroseptica and characterization of virulence factors.</title>
        <authorList>
            <person name="Bell K.S."/>
            <person name="Sebaihia M."/>
            <person name="Pritchard L."/>
            <person name="Holden M.T.G."/>
            <person name="Hyman L.J."/>
            <person name="Holeva M.C."/>
            <person name="Thomson N.R."/>
            <person name="Bentley S.D."/>
            <person name="Churcher L.J.C."/>
            <person name="Mungall K."/>
            <person name="Atkin R."/>
            <person name="Bason N."/>
            <person name="Brooks K."/>
            <person name="Chillingworth T."/>
            <person name="Clark K."/>
            <person name="Doggett J."/>
            <person name="Fraser A."/>
            <person name="Hance Z."/>
            <person name="Hauser H."/>
            <person name="Jagels K."/>
            <person name="Moule S."/>
            <person name="Norbertczak H."/>
            <person name="Ormond D."/>
            <person name="Price C."/>
            <person name="Quail M.A."/>
            <person name="Sanders M."/>
            <person name="Walker D."/>
            <person name="Whitehead S."/>
            <person name="Salmond G.P.C."/>
            <person name="Birch P.R.J."/>
            <person name="Parkhill J."/>
            <person name="Toth I.K."/>
        </authorList>
    </citation>
    <scope>NUCLEOTIDE SEQUENCE [LARGE SCALE GENOMIC DNA]</scope>
    <source>
        <strain>SCRI 1043 / ATCC BAA-672</strain>
    </source>
</reference>
<dbReference type="EC" id="2.1.2.3" evidence="1"/>
<dbReference type="EC" id="3.5.4.10" evidence="1"/>
<dbReference type="EMBL" id="BX950851">
    <property type="protein sequence ID" value="CAG73161.1"/>
    <property type="molecule type" value="Genomic_DNA"/>
</dbReference>
<dbReference type="SMR" id="Q6DAL2"/>
<dbReference type="STRING" id="218491.ECA0241"/>
<dbReference type="KEGG" id="eca:ECA0241"/>
<dbReference type="eggNOG" id="COG0138">
    <property type="taxonomic scope" value="Bacteria"/>
</dbReference>
<dbReference type="HOGENOM" id="CLU_016316_5_2_6"/>
<dbReference type="OrthoDB" id="9802065at2"/>
<dbReference type="UniPathway" id="UPA00074">
    <property type="reaction ID" value="UER00133"/>
</dbReference>
<dbReference type="UniPathway" id="UPA00074">
    <property type="reaction ID" value="UER00135"/>
</dbReference>
<dbReference type="Proteomes" id="UP000007966">
    <property type="component" value="Chromosome"/>
</dbReference>
<dbReference type="GO" id="GO:0005829">
    <property type="term" value="C:cytosol"/>
    <property type="evidence" value="ECO:0007669"/>
    <property type="project" value="TreeGrafter"/>
</dbReference>
<dbReference type="GO" id="GO:0003937">
    <property type="term" value="F:IMP cyclohydrolase activity"/>
    <property type="evidence" value="ECO:0007669"/>
    <property type="project" value="UniProtKB-UniRule"/>
</dbReference>
<dbReference type="GO" id="GO:0004643">
    <property type="term" value="F:phosphoribosylaminoimidazolecarboxamide formyltransferase activity"/>
    <property type="evidence" value="ECO:0007669"/>
    <property type="project" value="UniProtKB-UniRule"/>
</dbReference>
<dbReference type="GO" id="GO:0006189">
    <property type="term" value="P:'de novo' IMP biosynthetic process"/>
    <property type="evidence" value="ECO:0007669"/>
    <property type="project" value="UniProtKB-UniRule"/>
</dbReference>
<dbReference type="CDD" id="cd01421">
    <property type="entry name" value="IMPCH"/>
    <property type="match status" value="1"/>
</dbReference>
<dbReference type="FunFam" id="3.40.140.20:FF:000001">
    <property type="entry name" value="Bifunctional purine biosynthesis protein PurH"/>
    <property type="match status" value="1"/>
</dbReference>
<dbReference type="FunFam" id="3.40.140.20:FF:000002">
    <property type="entry name" value="Bifunctional purine biosynthesis protein PurH"/>
    <property type="match status" value="1"/>
</dbReference>
<dbReference type="FunFam" id="3.40.50.1380:FF:000001">
    <property type="entry name" value="Bifunctional purine biosynthesis protein PurH"/>
    <property type="match status" value="1"/>
</dbReference>
<dbReference type="Gene3D" id="3.40.140.20">
    <property type="match status" value="2"/>
</dbReference>
<dbReference type="Gene3D" id="3.40.50.1380">
    <property type="entry name" value="Methylglyoxal synthase-like domain"/>
    <property type="match status" value="1"/>
</dbReference>
<dbReference type="HAMAP" id="MF_00139">
    <property type="entry name" value="PurH"/>
    <property type="match status" value="1"/>
</dbReference>
<dbReference type="InterPro" id="IPR024051">
    <property type="entry name" value="AICAR_Tfase_dup_dom_sf"/>
</dbReference>
<dbReference type="InterPro" id="IPR016193">
    <property type="entry name" value="Cytidine_deaminase-like"/>
</dbReference>
<dbReference type="InterPro" id="IPR011607">
    <property type="entry name" value="MGS-like_dom"/>
</dbReference>
<dbReference type="InterPro" id="IPR036914">
    <property type="entry name" value="MGS-like_dom_sf"/>
</dbReference>
<dbReference type="InterPro" id="IPR002695">
    <property type="entry name" value="PurH-like"/>
</dbReference>
<dbReference type="NCBIfam" id="NF002049">
    <property type="entry name" value="PRK00881.1"/>
    <property type="match status" value="1"/>
</dbReference>
<dbReference type="NCBIfam" id="TIGR00355">
    <property type="entry name" value="purH"/>
    <property type="match status" value="1"/>
</dbReference>
<dbReference type="PANTHER" id="PTHR11692:SF0">
    <property type="entry name" value="BIFUNCTIONAL PURINE BIOSYNTHESIS PROTEIN ATIC"/>
    <property type="match status" value="1"/>
</dbReference>
<dbReference type="PANTHER" id="PTHR11692">
    <property type="entry name" value="BIFUNCTIONAL PURINE BIOSYNTHESIS PROTEIN PURH"/>
    <property type="match status" value="1"/>
</dbReference>
<dbReference type="Pfam" id="PF01808">
    <property type="entry name" value="AICARFT_IMPCHas"/>
    <property type="match status" value="1"/>
</dbReference>
<dbReference type="Pfam" id="PF02142">
    <property type="entry name" value="MGS"/>
    <property type="match status" value="1"/>
</dbReference>
<dbReference type="PIRSF" id="PIRSF000414">
    <property type="entry name" value="AICARFT_IMPCHas"/>
    <property type="match status" value="1"/>
</dbReference>
<dbReference type="SMART" id="SM00798">
    <property type="entry name" value="AICARFT_IMPCHas"/>
    <property type="match status" value="1"/>
</dbReference>
<dbReference type="SMART" id="SM00851">
    <property type="entry name" value="MGS"/>
    <property type="match status" value="1"/>
</dbReference>
<dbReference type="SUPFAM" id="SSF53927">
    <property type="entry name" value="Cytidine deaminase-like"/>
    <property type="match status" value="1"/>
</dbReference>
<dbReference type="SUPFAM" id="SSF52335">
    <property type="entry name" value="Methylglyoxal synthase-like"/>
    <property type="match status" value="1"/>
</dbReference>
<dbReference type="PROSITE" id="PS51855">
    <property type="entry name" value="MGS"/>
    <property type="match status" value="1"/>
</dbReference>
<evidence type="ECO:0000255" key="1">
    <source>
        <dbReference type="HAMAP-Rule" id="MF_00139"/>
    </source>
</evidence>
<evidence type="ECO:0000255" key="2">
    <source>
        <dbReference type="PROSITE-ProRule" id="PRU01202"/>
    </source>
</evidence>
<protein>
    <recommendedName>
        <fullName evidence="1">Bifunctional purine biosynthesis protein PurH</fullName>
    </recommendedName>
    <domain>
        <recommendedName>
            <fullName evidence="1">Phosphoribosylaminoimidazolecarboxamide formyltransferase</fullName>
            <ecNumber evidence="1">2.1.2.3</ecNumber>
        </recommendedName>
        <alternativeName>
            <fullName evidence="1">AICAR transformylase</fullName>
        </alternativeName>
    </domain>
    <domain>
        <recommendedName>
            <fullName evidence="1">IMP cyclohydrolase</fullName>
            <ecNumber evidence="1">3.5.4.10</ecNumber>
        </recommendedName>
        <alternativeName>
            <fullName evidence="1">ATIC</fullName>
        </alternativeName>
        <alternativeName>
            <fullName evidence="1">IMP synthase</fullName>
        </alternativeName>
        <alternativeName>
            <fullName evidence="1">Inosinicase</fullName>
        </alternativeName>
    </domain>
</protein>
<accession>Q6DAL2</accession>